<accession>Q1C6D7</accession>
<comment type="function">
    <text evidence="1">Catalyzes the thiamine diphosphate-dependent decarboxylation of 2-oxoglutarate and the subsequent addition of the resulting succinic semialdehyde-thiamine pyrophosphate anion to isochorismate to yield 2-succinyl-5-enolpyruvyl-6-hydroxy-3-cyclohexene-1-carboxylate (SEPHCHC).</text>
</comment>
<comment type="catalytic activity">
    <reaction evidence="1">
        <text>isochorismate + 2-oxoglutarate + H(+) = 5-enolpyruvoyl-6-hydroxy-2-succinyl-cyclohex-3-ene-1-carboxylate + CO2</text>
        <dbReference type="Rhea" id="RHEA:25593"/>
        <dbReference type="ChEBI" id="CHEBI:15378"/>
        <dbReference type="ChEBI" id="CHEBI:16526"/>
        <dbReference type="ChEBI" id="CHEBI:16810"/>
        <dbReference type="ChEBI" id="CHEBI:29780"/>
        <dbReference type="ChEBI" id="CHEBI:58818"/>
        <dbReference type="EC" id="2.2.1.9"/>
    </reaction>
</comment>
<comment type="cofactor">
    <cofactor evidence="1">
        <name>Mg(2+)</name>
        <dbReference type="ChEBI" id="CHEBI:18420"/>
    </cofactor>
    <cofactor evidence="1">
        <name>Mn(2+)</name>
        <dbReference type="ChEBI" id="CHEBI:29035"/>
    </cofactor>
</comment>
<comment type="cofactor">
    <cofactor evidence="1">
        <name>thiamine diphosphate</name>
        <dbReference type="ChEBI" id="CHEBI:58937"/>
    </cofactor>
    <text evidence="1">Binds 1 thiamine pyrophosphate per subunit.</text>
</comment>
<comment type="pathway">
    <text evidence="1">Quinol/quinone metabolism; 1,4-dihydroxy-2-naphthoate biosynthesis; 1,4-dihydroxy-2-naphthoate from chorismate: step 2/7.</text>
</comment>
<comment type="pathway">
    <text evidence="1">Quinol/quinone metabolism; menaquinone biosynthesis.</text>
</comment>
<comment type="subunit">
    <text evidence="1">Homodimer.</text>
</comment>
<comment type="similarity">
    <text evidence="1">Belongs to the TPP enzyme family. MenD subfamily.</text>
</comment>
<sequence length="567" mass="61777">MSTSVFNRRWAALLLEALTRHGVRHICIAPGSRSTPLTLAAAANPSLVCHTHFDERGLGHLALGLAKASTEPVAVIVTSGTAVANLYPALIEAGLTGERLILLTADRPPELIDCGANQAIRQQGLFASHPTLSVNLPRPTPDISARWLVSTLDSAMAQLQHGALHINCPFAEPLYGGDEQQYADWSASLGDWWQDCHPWLRQTCYPPSLYQPPAQQADWFFWRQKRGVVIAGRMGAQEGRQLTAWAAMLGWPLIGDVLSQTGQPLPCADLWLAHPRAQETLAQAQMVLQFGSSLTSKRLLQWQTACQPQEYWLVDSAPGRLDPANHRGRRIICPVGEWLSRHPAQRRTPWATELAAYSESAQAQVIETLAGQFSEAAVAHQLAELLPDNGQLFVGNSLIVRLIDALGQLPAGYPVYSNRGASGIDGLLSTAAGVQRATAKPTLAIVGDLSALYDLNALALLRQSSAPMVLLVINNNGGQIFSLLPTPEAERQRFYCMPQDVNFEHAAVMFSLGYARPNSWPQLRELAHQCWLRGGTTLIEVQVPPSQGAETLQQLVQQVTLIPQVAP</sequence>
<dbReference type="EC" id="2.2.1.9" evidence="1"/>
<dbReference type="EMBL" id="CP000308">
    <property type="protein sequence ID" value="ABG13985.1"/>
    <property type="molecule type" value="Genomic_DNA"/>
</dbReference>
<dbReference type="RefSeq" id="WP_002210247.1">
    <property type="nucleotide sequence ID" value="NZ_CP009906.1"/>
</dbReference>
<dbReference type="SMR" id="Q1C6D7"/>
<dbReference type="GeneID" id="57976160"/>
<dbReference type="KEGG" id="ypa:YPA_2019"/>
<dbReference type="UniPathway" id="UPA00079"/>
<dbReference type="UniPathway" id="UPA01057">
    <property type="reaction ID" value="UER00164"/>
</dbReference>
<dbReference type="Proteomes" id="UP000001971">
    <property type="component" value="Chromosome"/>
</dbReference>
<dbReference type="GO" id="GO:0070204">
    <property type="term" value="F:2-succinyl-5-enolpyruvyl-6-hydroxy-3-cyclohexene-1-carboxylic-acid synthase activity"/>
    <property type="evidence" value="ECO:0007669"/>
    <property type="project" value="UniProtKB-UniRule"/>
</dbReference>
<dbReference type="GO" id="GO:0000287">
    <property type="term" value="F:magnesium ion binding"/>
    <property type="evidence" value="ECO:0007669"/>
    <property type="project" value="UniProtKB-UniRule"/>
</dbReference>
<dbReference type="GO" id="GO:0030145">
    <property type="term" value="F:manganese ion binding"/>
    <property type="evidence" value="ECO:0007669"/>
    <property type="project" value="UniProtKB-UniRule"/>
</dbReference>
<dbReference type="GO" id="GO:0030976">
    <property type="term" value="F:thiamine pyrophosphate binding"/>
    <property type="evidence" value="ECO:0007669"/>
    <property type="project" value="UniProtKB-UniRule"/>
</dbReference>
<dbReference type="GO" id="GO:0009234">
    <property type="term" value="P:menaquinone biosynthetic process"/>
    <property type="evidence" value="ECO:0007669"/>
    <property type="project" value="UniProtKB-UniRule"/>
</dbReference>
<dbReference type="CDD" id="cd07037">
    <property type="entry name" value="TPP_PYR_MenD"/>
    <property type="match status" value="1"/>
</dbReference>
<dbReference type="CDD" id="cd02009">
    <property type="entry name" value="TPP_SHCHC_synthase"/>
    <property type="match status" value="1"/>
</dbReference>
<dbReference type="FunFam" id="3.40.50.970:FF:000029">
    <property type="entry name" value="2-succinyl-5-enolpyruvyl-6-hydroxy-3-cyclohexene-1-carboxylate synthase"/>
    <property type="match status" value="1"/>
</dbReference>
<dbReference type="Gene3D" id="3.40.50.970">
    <property type="match status" value="2"/>
</dbReference>
<dbReference type="Gene3D" id="3.40.50.1220">
    <property type="entry name" value="TPP-binding domain"/>
    <property type="match status" value="1"/>
</dbReference>
<dbReference type="HAMAP" id="MF_01659">
    <property type="entry name" value="MenD"/>
    <property type="match status" value="1"/>
</dbReference>
<dbReference type="InterPro" id="IPR004433">
    <property type="entry name" value="MenaQ_synth_MenD"/>
</dbReference>
<dbReference type="InterPro" id="IPR032264">
    <property type="entry name" value="MenD_middle"/>
</dbReference>
<dbReference type="InterPro" id="IPR029061">
    <property type="entry name" value="THDP-binding"/>
</dbReference>
<dbReference type="InterPro" id="IPR012001">
    <property type="entry name" value="Thiamin_PyroP_enz_TPP-bd_dom"/>
</dbReference>
<dbReference type="InterPro" id="IPR011766">
    <property type="entry name" value="TPP_enzyme_TPP-bd"/>
</dbReference>
<dbReference type="NCBIfam" id="TIGR00173">
    <property type="entry name" value="menD"/>
    <property type="match status" value="1"/>
</dbReference>
<dbReference type="PANTHER" id="PTHR42916">
    <property type="entry name" value="2-SUCCINYL-5-ENOLPYRUVYL-6-HYDROXY-3-CYCLOHEXENE-1-CARBOXYLATE SYNTHASE"/>
    <property type="match status" value="1"/>
</dbReference>
<dbReference type="PANTHER" id="PTHR42916:SF1">
    <property type="entry name" value="PROTEIN PHYLLO, CHLOROPLASTIC"/>
    <property type="match status" value="1"/>
</dbReference>
<dbReference type="Pfam" id="PF02775">
    <property type="entry name" value="TPP_enzyme_C"/>
    <property type="match status" value="1"/>
</dbReference>
<dbReference type="Pfam" id="PF16582">
    <property type="entry name" value="TPP_enzyme_M_2"/>
    <property type="match status" value="1"/>
</dbReference>
<dbReference type="Pfam" id="PF02776">
    <property type="entry name" value="TPP_enzyme_N"/>
    <property type="match status" value="1"/>
</dbReference>
<dbReference type="PIRSF" id="PIRSF004983">
    <property type="entry name" value="MenD"/>
    <property type="match status" value="1"/>
</dbReference>
<dbReference type="SUPFAM" id="SSF52518">
    <property type="entry name" value="Thiamin diphosphate-binding fold (THDP-binding)"/>
    <property type="match status" value="2"/>
</dbReference>
<organism>
    <name type="scientific">Yersinia pestis bv. Antiqua (strain Antiqua)</name>
    <dbReference type="NCBI Taxonomy" id="360102"/>
    <lineage>
        <taxon>Bacteria</taxon>
        <taxon>Pseudomonadati</taxon>
        <taxon>Pseudomonadota</taxon>
        <taxon>Gammaproteobacteria</taxon>
        <taxon>Enterobacterales</taxon>
        <taxon>Yersiniaceae</taxon>
        <taxon>Yersinia</taxon>
    </lineage>
</organism>
<proteinExistence type="inferred from homology"/>
<reference key="1">
    <citation type="journal article" date="2006" name="J. Bacteriol.">
        <title>Complete genome sequence of Yersinia pestis strains Antiqua and Nepal516: evidence of gene reduction in an emerging pathogen.</title>
        <authorList>
            <person name="Chain P.S.G."/>
            <person name="Hu P."/>
            <person name="Malfatti S.A."/>
            <person name="Radnedge L."/>
            <person name="Larimer F."/>
            <person name="Vergez L.M."/>
            <person name="Worsham P."/>
            <person name="Chu M.C."/>
            <person name="Andersen G.L."/>
        </authorList>
    </citation>
    <scope>NUCLEOTIDE SEQUENCE [LARGE SCALE GENOMIC DNA]</scope>
    <source>
        <strain>Antiqua</strain>
    </source>
</reference>
<feature type="chain" id="PRO_0000341892" description="2-succinyl-5-enolpyruvyl-6-hydroxy-3-cyclohexene-1-carboxylate synthase">
    <location>
        <begin position="1"/>
        <end position="567"/>
    </location>
</feature>
<protein>
    <recommendedName>
        <fullName evidence="1">2-succinyl-5-enolpyruvyl-6-hydroxy-3-cyclohexene-1-carboxylate synthase</fullName>
        <shortName evidence="1">SEPHCHC synthase</shortName>
        <ecNumber evidence="1">2.2.1.9</ecNumber>
    </recommendedName>
    <alternativeName>
        <fullName evidence="1">Menaquinone biosynthesis protein MenD</fullName>
    </alternativeName>
</protein>
<evidence type="ECO:0000255" key="1">
    <source>
        <dbReference type="HAMAP-Rule" id="MF_01659"/>
    </source>
</evidence>
<gene>
    <name evidence="1" type="primary">menD</name>
    <name type="ordered locus">YPA_2019</name>
</gene>
<name>MEND_YERPA</name>
<keyword id="KW-0460">Magnesium</keyword>
<keyword id="KW-0464">Manganese</keyword>
<keyword id="KW-0474">Menaquinone biosynthesis</keyword>
<keyword id="KW-0479">Metal-binding</keyword>
<keyword id="KW-0786">Thiamine pyrophosphate</keyword>
<keyword id="KW-0808">Transferase</keyword>